<name>RIR2_HHV2H</name>
<accession>P69521</accession>
<accession>P03174</accession>
<evidence type="ECO:0000255" key="1">
    <source>
        <dbReference type="HAMAP-Rule" id="MF_04028"/>
    </source>
</evidence>
<evidence type="ECO:0000256" key="2">
    <source>
        <dbReference type="SAM" id="MobiDB-lite"/>
    </source>
</evidence>
<organismHost>
    <name type="scientific">Homo sapiens</name>
    <name type="common">Human</name>
    <dbReference type="NCBI Taxonomy" id="9606"/>
</organismHost>
<organism>
    <name type="scientific">Human herpesvirus 2 (strain HG52)</name>
    <name type="common">HHV-2</name>
    <name type="synonym">Human herpes simplex virus 2</name>
    <dbReference type="NCBI Taxonomy" id="10315"/>
    <lineage>
        <taxon>Viruses</taxon>
        <taxon>Duplodnaviria</taxon>
        <taxon>Heunggongvirae</taxon>
        <taxon>Peploviricota</taxon>
        <taxon>Herviviricetes</taxon>
        <taxon>Herpesvirales</taxon>
        <taxon>Orthoherpesviridae</taxon>
        <taxon>Alphaherpesvirinae</taxon>
        <taxon>Simplexvirus</taxon>
        <taxon>Simplexvirus humanalpha2</taxon>
        <taxon>Human herpesvirus 2</taxon>
    </lineage>
</organism>
<proteinExistence type="inferred from homology"/>
<reference key="1">
    <citation type="journal article" date="1998" name="J. Virol.">
        <title>The genome sequence of herpes simplex virus type 2.</title>
        <authorList>
            <person name="Dolan A."/>
            <person name="Jamieson F.E."/>
            <person name="Cunningham C."/>
            <person name="Barnett B.C."/>
            <person name="McGeoch D.J."/>
        </authorList>
    </citation>
    <scope>NUCLEOTIDE SEQUENCE [LARGE SCALE GENOMIC DNA]</scope>
</reference>
<reference key="2">
    <citation type="journal article" date="2009" name="Trends Biochem. Sci.">
        <title>Tinkering with a viral ribonucleotide reductase.</title>
        <authorList>
            <person name="Lembo D."/>
            <person name="Brune W."/>
        </authorList>
    </citation>
    <scope>REVIEW</scope>
</reference>
<keyword id="KW-0235">DNA replication</keyword>
<keyword id="KW-1043">Host membrane</keyword>
<keyword id="KW-0408">Iron</keyword>
<keyword id="KW-0472">Membrane</keyword>
<keyword id="KW-0479">Metal-binding</keyword>
<keyword id="KW-0560">Oxidoreductase</keyword>
<keyword id="KW-1185">Reference proteome</keyword>
<keyword id="KW-0812">Transmembrane</keyword>
<keyword id="KW-1133">Transmembrane helix</keyword>
<keyword id="KW-1251">Viral latency</keyword>
<keyword id="KW-1272">Viral reactivation from latency</keyword>
<dbReference type="EC" id="1.17.4.1" evidence="1"/>
<dbReference type="EMBL" id="Z86099">
    <property type="protein sequence ID" value="CAB06726.1"/>
    <property type="molecule type" value="Genomic_DNA"/>
</dbReference>
<dbReference type="RefSeq" id="YP_009137192.1">
    <property type="nucleotide sequence ID" value="NC_001798.2"/>
</dbReference>
<dbReference type="SMR" id="P69521"/>
<dbReference type="DNASU" id="1487327"/>
<dbReference type="GeneID" id="1487327"/>
<dbReference type="KEGG" id="vg:1487327"/>
<dbReference type="Proteomes" id="UP000001874">
    <property type="component" value="Segment"/>
</dbReference>
<dbReference type="GO" id="GO:0033644">
    <property type="term" value="C:host cell membrane"/>
    <property type="evidence" value="ECO:0007669"/>
    <property type="project" value="UniProtKB-SubCell"/>
</dbReference>
<dbReference type="GO" id="GO:0016020">
    <property type="term" value="C:membrane"/>
    <property type="evidence" value="ECO:0007669"/>
    <property type="project" value="UniProtKB-KW"/>
</dbReference>
<dbReference type="GO" id="GO:0046872">
    <property type="term" value="F:metal ion binding"/>
    <property type="evidence" value="ECO:0007669"/>
    <property type="project" value="UniProtKB-KW"/>
</dbReference>
<dbReference type="GO" id="GO:0004748">
    <property type="term" value="F:ribonucleoside-diphosphate reductase activity, thioredoxin disulfide as acceptor"/>
    <property type="evidence" value="ECO:0007669"/>
    <property type="project" value="UniProtKB-EC"/>
</dbReference>
<dbReference type="GO" id="GO:0009263">
    <property type="term" value="P:deoxyribonucleotide biosynthetic process"/>
    <property type="evidence" value="ECO:0007669"/>
    <property type="project" value="InterPro"/>
</dbReference>
<dbReference type="GO" id="GO:0006260">
    <property type="term" value="P:DNA replication"/>
    <property type="evidence" value="ECO:0007669"/>
    <property type="project" value="UniProtKB-KW"/>
</dbReference>
<dbReference type="GO" id="GO:0019046">
    <property type="term" value="P:release from viral latency"/>
    <property type="evidence" value="ECO:0007669"/>
    <property type="project" value="UniProtKB-KW"/>
</dbReference>
<dbReference type="CDD" id="cd01049">
    <property type="entry name" value="RNRR2"/>
    <property type="match status" value="1"/>
</dbReference>
<dbReference type="Gene3D" id="1.10.620.20">
    <property type="entry name" value="Ribonucleotide Reductase, subunit A"/>
    <property type="match status" value="1"/>
</dbReference>
<dbReference type="HAMAP" id="MF_04028">
    <property type="entry name" value="HSV_RIR2"/>
    <property type="match status" value="1"/>
</dbReference>
<dbReference type="InterPro" id="IPR009078">
    <property type="entry name" value="Ferritin-like_SF"/>
</dbReference>
<dbReference type="InterPro" id="IPR034715">
    <property type="entry name" value="HSV_RIR2"/>
</dbReference>
<dbReference type="InterPro" id="IPR012348">
    <property type="entry name" value="RNR-like"/>
</dbReference>
<dbReference type="InterPro" id="IPR033909">
    <property type="entry name" value="RNR_small"/>
</dbReference>
<dbReference type="InterPro" id="IPR030475">
    <property type="entry name" value="RNR_small_AS"/>
</dbReference>
<dbReference type="InterPro" id="IPR000358">
    <property type="entry name" value="RNR_small_fam"/>
</dbReference>
<dbReference type="PANTHER" id="PTHR23409">
    <property type="entry name" value="RIBONUCLEOSIDE-DIPHOSPHATE REDUCTASE SMALL CHAIN"/>
    <property type="match status" value="1"/>
</dbReference>
<dbReference type="PANTHER" id="PTHR23409:SF18">
    <property type="entry name" value="RIBONUCLEOSIDE-DIPHOSPHATE REDUCTASE SUBUNIT M2"/>
    <property type="match status" value="1"/>
</dbReference>
<dbReference type="Pfam" id="PF00268">
    <property type="entry name" value="Ribonuc_red_sm"/>
    <property type="match status" value="1"/>
</dbReference>
<dbReference type="SUPFAM" id="SSF47240">
    <property type="entry name" value="Ferritin-like"/>
    <property type="match status" value="1"/>
</dbReference>
<dbReference type="PROSITE" id="PS00368">
    <property type="entry name" value="RIBORED_SMALL"/>
    <property type="match status" value="1"/>
</dbReference>
<feature type="chain" id="PRO_0000190506" description="Ribonucleoside-diphosphate reductase small subunit">
    <location>
        <begin position="1"/>
        <end position="337"/>
    </location>
</feature>
<feature type="transmembrane region" description="Helical" evidence="1">
    <location>
        <begin position="177"/>
        <end position="197"/>
    </location>
</feature>
<feature type="region of interest" description="Disordered" evidence="2">
    <location>
        <begin position="1"/>
        <end position="22"/>
    </location>
</feature>
<feature type="active site" evidence="1">
    <location>
        <position position="128"/>
    </location>
</feature>
<feature type="binding site" evidence="1">
    <location>
        <position position="91"/>
    </location>
    <ligand>
        <name>Fe cation</name>
        <dbReference type="ChEBI" id="CHEBI:24875"/>
        <label>1</label>
    </ligand>
</feature>
<feature type="binding site" evidence="1">
    <location>
        <position position="121"/>
    </location>
    <ligand>
        <name>Fe cation</name>
        <dbReference type="ChEBI" id="CHEBI:24875"/>
        <label>1</label>
    </ligand>
</feature>
<feature type="binding site" evidence="1">
    <location>
        <position position="121"/>
    </location>
    <ligand>
        <name>Fe cation</name>
        <dbReference type="ChEBI" id="CHEBI:24875"/>
        <label>2</label>
    </ligand>
</feature>
<feature type="binding site" evidence="1">
    <location>
        <position position="124"/>
    </location>
    <ligand>
        <name>Fe cation</name>
        <dbReference type="ChEBI" id="CHEBI:24875"/>
        <label>1</label>
    </ligand>
</feature>
<feature type="binding site" evidence="1">
    <location>
        <position position="184"/>
    </location>
    <ligand>
        <name>Fe cation</name>
        <dbReference type="ChEBI" id="CHEBI:24875"/>
        <label>2</label>
    </ligand>
</feature>
<feature type="binding site" evidence="1">
    <location>
        <position position="218"/>
    </location>
    <ligand>
        <name>Fe cation</name>
        <dbReference type="ChEBI" id="CHEBI:24875"/>
        <label>2</label>
    </ligand>
</feature>
<feature type="binding site" evidence="1">
    <location>
        <position position="221"/>
    </location>
    <ligand>
        <name>Fe cation</name>
        <dbReference type="ChEBI" id="CHEBI:24875"/>
        <label>2</label>
    </ligand>
</feature>
<protein>
    <recommendedName>
        <fullName evidence="1">Ribonucleoside-diphosphate reductase small subunit</fullName>
        <ecNumber evidence="1">1.17.4.1</ecNumber>
    </recommendedName>
    <alternativeName>
        <fullName evidence="1">Ribonucleotide reductase small subunit</fullName>
    </alternativeName>
</protein>
<gene>
    <name evidence="1" type="primary">RIR2</name>
    <name type="ORF">UL40</name>
</gene>
<sequence length="337" mass="37626">MDPAVSPASTDPLDTHASGAGAAPIPVCPTPERYFYTSQCPDINHLRSLSILNRWLETELVFVGDEEDVSKLSEGELGFYRFLFAFLSAADDLVTENLGGLSGLFEQKDILHYYVEQECIEVVHSRVYNIIQLVLFHNNDQARRAYVARTINHPAIRVKVDWLEARVRECDSIPEKFILMILIEGVFFAASFAAIAYLRTNNLLRVTCQSNDLISRDEAVHTTASCYIYNNYLGGHAKPEAARVYRLFREAVDIEIGFIRSQAPTDSSILSPGALAAIENYVRFSADRLLGLIHMQPLYSAPAPDASFPLSLMSTDKHTNFFECRSTSYAGAVVNDL</sequence>
<comment type="function">
    <text evidence="1">Ribonucleoside-diphosphate reductase holoenzyme provides the precursors necessary for viral DNA synthesis. Allows virus growth in non-dividing cells, as well as reactivation from latency in infected hosts. Catalyzes the biosynthesis of deoxyribonucleotides from the corresponding ribonucleotides.</text>
</comment>
<comment type="catalytic activity">
    <reaction evidence="1">
        <text>a 2'-deoxyribonucleoside 5'-diphosphate + [thioredoxin]-disulfide + H2O = a ribonucleoside 5'-diphosphate + [thioredoxin]-dithiol</text>
        <dbReference type="Rhea" id="RHEA:23252"/>
        <dbReference type="Rhea" id="RHEA-COMP:10698"/>
        <dbReference type="Rhea" id="RHEA-COMP:10700"/>
        <dbReference type="ChEBI" id="CHEBI:15377"/>
        <dbReference type="ChEBI" id="CHEBI:29950"/>
        <dbReference type="ChEBI" id="CHEBI:50058"/>
        <dbReference type="ChEBI" id="CHEBI:57930"/>
        <dbReference type="ChEBI" id="CHEBI:73316"/>
        <dbReference type="EC" id="1.17.4.1"/>
    </reaction>
</comment>
<comment type="cofactor">
    <cofactor evidence="1">
        <name>Fe cation</name>
        <dbReference type="ChEBI" id="CHEBI:24875"/>
    </cofactor>
</comment>
<comment type="subunit">
    <text evidence="1">Heterotetramer composed of a homodimer of the large subunit (R1) and a homodimer of the small subunit (R2). Larger multisubunit protein complex are also active, composed of (R1)n(R2)n.</text>
</comment>
<comment type="subcellular location">
    <subcellularLocation>
        <location evidence="1">Host membrane</location>
        <topology evidence="1">Single-pass membrane protein</topology>
    </subcellularLocation>
</comment>
<comment type="similarity">
    <text evidence="1">Belongs to the ribonucleoside diphosphate reductase small chain family.</text>
</comment>